<feature type="chain" id="PRO_0000436114" description="Geranylgeranyl pyrophosphate synthase atmG">
    <location>
        <begin position="1"/>
        <end position="340"/>
    </location>
</feature>
<feature type="region of interest" description="Disordered" evidence="2">
    <location>
        <begin position="19"/>
        <end position="51"/>
    </location>
</feature>
<feature type="compositionally biased region" description="Polar residues" evidence="2">
    <location>
        <begin position="19"/>
        <end position="48"/>
    </location>
</feature>
<feature type="binding site" evidence="1">
    <location>
        <position position="69"/>
    </location>
    <ligand>
        <name>isopentenyl diphosphate</name>
        <dbReference type="ChEBI" id="CHEBI:128769"/>
    </ligand>
</feature>
<feature type="binding site" evidence="1">
    <location>
        <position position="72"/>
    </location>
    <ligand>
        <name>isopentenyl diphosphate</name>
        <dbReference type="ChEBI" id="CHEBI:128769"/>
    </ligand>
</feature>
<feature type="binding site" evidence="1">
    <location>
        <position position="101"/>
    </location>
    <ligand>
        <name>isopentenyl diphosphate</name>
        <dbReference type="ChEBI" id="CHEBI:128769"/>
    </ligand>
</feature>
<feature type="binding site" evidence="1">
    <location>
        <position position="108"/>
    </location>
    <ligand>
        <name>Mg(2+)</name>
        <dbReference type="ChEBI" id="CHEBI:18420"/>
        <label>1</label>
    </ligand>
</feature>
<feature type="binding site" evidence="1">
    <location>
        <position position="108"/>
    </location>
    <ligand>
        <name>Mg(2+)</name>
        <dbReference type="ChEBI" id="CHEBI:18420"/>
        <label>2</label>
    </ligand>
</feature>
<feature type="binding site" evidence="1">
    <location>
        <position position="112"/>
    </location>
    <ligand>
        <name>Mg(2+)</name>
        <dbReference type="ChEBI" id="CHEBI:18420"/>
        <label>1</label>
    </ligand>
</feature>
<feature type="binding site" evidence="1">
    <location>
        <position position="112"/>
    </location>
    <ligand>
        <name>Mg(2+)</name>
        <dbReference type="ChEBI" id="CHEBI:18420"/>
        <label>2</label>
    </ligand>
</feature>
<feature type="binding site" evidence="1">
    <location>
        <position position="117"/>
    </location>
    <ligand>
        <name>dimethylallyl diphosphate</name>
        <dbReference type="ChEBI" id="CHEBI:57623"/>
    </ligand>
</feature>
<feature type="binding site" evidence="1">
    <location>
        <position position="118"/>
    </location>
    <ligand>
        <name>isopentenyl diphosphate</name>
        <dbReference type="ChEBI" id="CHEBI:128769"/>
    </ligand>
</feature>
<feature type="binding site" evidence="1">
    <location>
        <position position="195"/>
    </location>
    <ligand>
        <name>dimethylallyl diphosphate</name>
        <dbReference type="ChEBI" id="CHEBI:57623"/>
    </ligand>
</feature>
<feature type="binding site" evidence="1">
    <location>
        <position position="196"/>
    </location>
    <ligand>
        <name>dimethylallyl diphosphate</name>
        <dbReference type="ChEBI" id="CHEBI:57623"/>
    </ligand>
</feature>
<feature type="binding site" evidence="1">
    <location>
        <position position="229"/>
    </location>
    <ligand>
        <name>dimethylallyl diphosphate</name>
        <dbReference type="ChEBI" id="CHEBI:57623"/>
    </ligand>
</feature>
<feature type="binding site" evidence="1">
    <location>
        <position position="232"/>
    </location>
    <ligand>
        <name>Mg(2+)</name>
        <dbReference type="ChEBI" id="CHEBI:18420"/>
        <label>3</label>
    </ligand>
</feature>
<feature type="binding site" evidence="1">
    <location>
        <position position="236"/>
    </location>
    <ligand>
        <name>dimethylallyl diphosphate</name>
        <dbReference type="ChEBI" id="CHEBI:57623"/>
    </ligand>
</feature>
<feature type="binding site" evidence="1">
    <location>
        <position position="246"/>
    </location>
    <ligand>
        <name>dimethylallyl diphosphate</name>
        <dbReference type="ChEBI" id="CHEBI:57623"/>
    </ligand>
</feature>
<feature type="binding site" evidence="1">
    <location>
        <position position="256"/>
    </location>
    <ligand>
        <name>dimethylallyl diphosphate</name>
        <dbReference type="ChEBI" id="CHEBI:57623"/>
    </ligand>
</feature>
<feature type="site" description="Important for determining product chain length" evidence="1">
    <location>
        <position position="140"/>
    </location>
</feature>
<dbReference type="EC" id="2.5.1.-" evidence="8"/>
<dbReference type="EC" id="2.5.1.1" evidence="1"/>
<dbReference type="EC" id="2.5.1.29" evidence="1"/>
<dbReference type="EC" id="2.5.1.10" evidence="1"/>
<dbReference type="EMBL" id="AY559849">
    <property type="protein sequence ID" value="AAT65717.1"/>
    <property type="molecule type" value="Genomic_DNA"/>
</dbReference>
<dbReference type="SMR" id="Q672V6"/>
<dbReference type="VEuPathDB" id="FungiDB:AFLA_000006"/>
<dbReference type="VEuPathDB" id="FungiDB:F9C07_4242"/>
<dbReference type="GO" id="GO:0004337">
    <property type="term" value="F:(2E,6E)-farnesyl diphosphate synthase activity"/>
    <property type="evidence" value="ECO:0007669"/>
    <property type="project" value="UniProtKB-EC"/>
</dbReference>
<dbReference type="GO" id="GO:0004161">
    <property type="term" value="F:dimethylallyltranstransferase activity"/>
    <property type="evidence" value="ECO:0007669"/>
    <property type="project" value="UniProtKB-EC"/>
</dbReference>
<dbReference type="GO" id="GO:0004311">
    <property type="term" value="F:geranylgeranyl diphosphate synthase activity"/>
    <property type="evidence" value="ECO:0007669"/>
    <property type="project" value="UniProtKB-EC"/>
</dbReference>
<dbReference type="GO" id="GO:0046872">
    <property type="term" value="F:metal ion binding"/>
    <property type="evidence" value="ECO:0007669"/>
    <property type="project" value="UniProtKB-KW"/>
</dbReference>
<dbReference type="GO" id="GO:0046165">
    <property type="term" value="P:alcohol biosynthetic process"/>
    <property type="evidence" value="ECO:0007669"/>
    <property type="project" value="UniProtKB-ARBA"/>
</dbReference>
<dbReference type="GO" id="GO:0008299">
    <property type="term" value="P:isoprenoid biosynthetic process"/>
    <property type="evidence" value="ECO:0007669"/>
    <property type="project" value="UniProtKB-KW"/>
</dbReference>
<dbReference type="GO" id="GO:0043386">
    <property type="term" value="P:mycotoxin biosynthetic process"/>
    <property type="evidence" value="ECO:0007669"/>
    <property type="project" value="UniProtKB-ARBA"/>
</dbReference>
<dbReference type="CDD" id="cd00685">
    <property type="entry name" value="Trans_IPPS_HT"/>
    <property type="match status" value="1"/>
</dbReference>
<dbReference type="Gene3D" id="1.10.600.10">
    <property type="entry name" value="Farnesyl Diphosphate Synthase"/>
    <property type="match status" value="1"/>
</dbReference>
<dbReference type="InterPro" id="IPR008949">
    <property type="entry name" value="Isoprenoid_synthase_dom_sf"/>
</dbReference>
<dbReference type="InterPro" id="IPR000092">
    <property type="entry name" value="Polyprenyl_synt"/>
</dbReference>
<dbReference type="InterPro" id="IPR033749">
    <property type="entry name" value="Polyprenyl_synt_CS"/>
</dbReference>
<dbReference type="PANTHER" id="PTHR12001">
    <property type="entry name" value="GERANYLGERANYL PYROPHOSPHATE SYNTHASE"/>
    <property type="match status" value="1"/>
</dbReference>
<dbReference type="PANTHER" id="PTHR12001:SF70">
    <property type="entry name" value="PYROPHOSPHATE SYNTHETASE ATMG, PUTATIVE (AFU_ORTHOLOGUE AFUA_8G02400)-RELATED"/>
    <property type="match status" value="1"/>
</dbReference>
<dbReference type="Pfam" id="PF00348">
    <property type="entry name" value="polyprenyl_synt"/>
    <property type="match status" value="1"/>
</dbReference>
<dbReference type="SFLD" id="SFLDS00005">
    <property type="entry name" value="Isoprenoid_Synthase_Type_I"/>
    <property type="match status" value="1"/>
</dbReference>
<dbReference type="SUPFAM" id="SSF48576">
    <property type="entry name" value="Terpenoid synthases"/>
    <property type="match status" value="1"/>
</dbReference>
<dbReference type="PROSITE" id="PS00723">
    <property type="entry name" value="POLYPRENYL_SYNTHASE_1"/>
    <property type="match status" value="1"/>
</dbReference>
<dbReference type="PROSITE" id="PS00444">
    <property type="entry name" value="POLYPRENYL_SYNTHASE_2"/>
    <property type="match status" value="1"/>
</dbReference>
<reference key="1">
    <citation type="journal article" date="2004" name="Appl. Environ. Microbiol.">
        <title>Indole-diterpene gene cluster from Aspergillus flavus.</title>
        <authorList>
            <person name="Zhang S."/>
            <person name="Monahan B.J."/>
            <person name="Tkacz J.S."/>
            <person name="Scott B."/>
        </authorList>
    </citation>
    <scope>NUCLEOTIDE SEQUENCE [GENOMIC DNA]</scope>
    <scope>INDUCTION</scope>
</reference>
<reference key="2">
    <citation type="journal article" date="2009" name="Appl. Environ. Microbiol.">
        <title>Identification of two aflatrem biosynthesis gene loci in Aspergillus flavus and metabolic engineering of Penicillium paxilli to elucidate their function.</title>
        <authorList>
            <person name="Nicholson M.J."/>
            <person name="Koulman A."/>
            <person name="Monahan B.J."/>
            <person name="Pritchard B.L."/>
            <person name="Payne G.A."/>
            <person name="Scott B."/>
        </authorList>
    </citation>
    <scope>NUCLEOTIDE SEQUENCE [GENOMIC DNA]</scope>
    <scope>IDENTIFICATION</scope>
    <scope>INDUCTION</scope>
    <scope>FUNCTION</scope>
    <source>
        <strain>NRRL 6541</strain>
    </source>
</reference>
<reference key="3">
    <citation type="journal article" date="1985" name="Environ. Health Perspect.">
        <title>Aflatrem: a tremorgenic mycotoxin with acute neurotoxic effects.</title>
        <authorList>
            <person name="Valdes J.J."/>
            <person name="Cameron J.E."/>
            <person name="Cole R.J."/>
        </authorList>
    </citation>
    <scope>FUNCTION</scope>
</reference>
<reference key="4">
    <citation type="journal article" date="2007" name="Appl. Microbiol. Biotechnol.">
        <title>Production of cyclopiazonic acid, aflatrem, and aflatoxin by Aspergillus flavus is regulated by veA, a gene necessary for sclerotial formation.</title>
        <authorList>
            <person name="Duran R.M."/>
            <person name="Cary J.W."/>
            <person name="Calvo A.M."/>
        </authorList>
    </citation>
    <scope>INDUCTION</scope>
</reference>
<name>ATMG_ASPFL</name>
<gene>
    <name evidence="7" type="primary">atmG</name>
    <name evidence="7" type="ORF">AF111</name>
</gene>
<evidence type="ECO:0000250" key="1">
    <source>
        <dbReference type="UniProtKB" id="Q12051"/>
    </source>
</evidence>
<evidence type="ECO:0000256" key="2">
    <source>
        <dbReference type="SAM" id="MobiDB-lite"/>
    </source>
</evidence>
<evidence type="ECO:0000269" key="3">
    <source>
    </source>
</evidence>
<evidence type="ECO:0000269" key="4">
    <source>
    </source>
</evidence>
<evidence type="ECO:0000269" key="5">
    <source>
    </source>
</evidence>
<evidence type="ECO:0000269" key="6">
    <source>
    </source>
</evidence>
<evidence type="ECO:0000303" key="7">
    <source>
    </source>
</evidence>
<evidence type="ECO:0000305" key="8"/>
<evidence type="ECO:0000312" key="9">
    <source>
        <dbReference type="EMBL" id="AAT65717.1"/>
    </source>
</evidence>
<organism evidence="9">
    <name type="scientific">Aspergillus flavus</name>
    <dbReference type="NCBI Taxonomy" id="5059"/>
    <lineage>
        <taxon>Eukaryota</taxon>
        <taxon>Fungi</taxon>
        <taxon>Dikarya</taxon>
        <taxon>Ascomycota</taxon>
        <taxon>Pezizomycotina</taxon>
        <taxon>Eurotiomycetes</taxon>
        <taxon>Eurotiomycetidae</taxon>
        <taxon>Eurotiales</taxon>
        <taxon>Aspergillaceae</taxon>
        <taxon>Aspergillus</taxon>
        <taxon>Aspergillus subgen. Circumdati</taxon>
    </lineage>
</organism>
<accession>Q672V6</accession>
<protein>
    <recommendedName>
        <fullName evidence="7">Geranylgeranyl pyrophosphate synthase atmG</fullName>
        <shortName evidence="8">GGPP synthase</shortName>
        <shortName evidence="8">GGPPSase</shortName>
        <ecNumber evidence="8">2.5.1.-</ecNumber>
    </recommendedName>
    <alternativeName>
        <fullName evidence="1">(2E,6E)-farnesyl diphosphate synthase</fullName>
    </alternativeName>
    <alternativeName>
        <fullName evidence="7">Aflatrem synthesis protein G</fullName>
    </alternativeName>
    <alternativeName>
        <fullName evidence="1">Dimethylallyltranstransferase</fullName>
        <ecNumber evidence="1">2.5.1.1</ecNumber>
    </alternativeName>
    <alternativeName>
        <fullName evidence="1">Farnesyl diphosphate synthase</fullName>
    </alternativeName>
    <alternativeName>
        <fullName evidence="1">Farnesyltranstransferase</fullName>
        <ecNumber evidence="1">2.5.1.29</ecNumber>
    </alternativeName>
    <alternativeName>
        <fullName evidence="1">Geranylgeranyl diphosphate synthase</fullName>
    </alternativeName>
    <alternativeName>
        <fullName evidence="1">Geranyltranstransferase</fullName>
        <ecNumber evidence="1">2.5.1.10</ecNumber>
    </alternativeName>
</protein>
<sequence length="340" mass="38470">MISGVPDRWKVVASSLSSNLDASYPTSSSLSTEPIDTRSSSPQGSASTPVDKEKIIRGPVDYLLKCPGKDIRRKLMQAFNEWLRIPEDRLNIIAEIVGLLHTASLLIDDIQDSSKLRRGIPVAHSIFGVAQTINSANYAYFAAQEKLRELNRPKAYEIFTEELLRLHRGQGMDLYWRDSLTCPTEEEYIEMISNKTGGLFRLAIKLMQLESEVTSDFLGLVDLLGVIFQIRDDYQNLQSDLYSKNKGFCEDLTEGKFSFLIIHSINSNPGNQQLLNILRQRSEEESVKKYAVEYIRSTGSFAYCQDRLASFLHEAKMMVNVLEDNVGFSKGIYDILAFLL</sequence>
<keyword id="KW-0414">Isoprene biosynthesis</keyword>
<keyword id="KW-0460">Magnesium</keyword>
<keyword id="KW-0479">Metal-binding</keyword>
<keyword id="KW-0808">Transferase</keyword>
<proteinExistence type="evidence at transcript level"/>
<comment type="function">
    <text evidence="5 6">Geranylgeranyl pyrophosphate synthase; part of the ATM1 gene cluster that mediates the biosynthesis of aflatrem, a tremorgenic mycotoxin with acute neurotoxic effects (PubMed:19801473, PubMed:2867895). Synthesis of geranylgeranyl diphosphate (GGPP) by AtmG (a GGPP synthase) precedes condensation of GGPP with indole 3-glycerol phosphate, followed by epoxidation and cyclization by AtmM (a FAD-dependent monooxygenase) and AtmC (a prenyltransferase) to produce paspaline (PubMed:19801473). AtmB is also essential for paspaline production, but its exact role has not been identified yet (PubMed:19801473). AtmP, a cytochrome P450 monooxygenase, subsequently converts paspaline to 13-desoxypaxilline via PC-M6 by removal of the C-30 methyl group and oxidation at C-10 (PubMed:19801473). AtmQ, a cytochrome P450 monooxygenase, then catalyzes the oxidation of 13-desoxypaxilline, first at C-7 to produce paspalicine and then at C-13 to form paspalinine (PubMed:19801473). Finally, AtmD prenylates paspalinine to form aflatrem (PubMed:19801473).</text>
</comment>
<comment type="catalytic activity">
    <reaction evidence="1">
        <text>isopentenyl diphosphate + dimethylallyl diphosphate = (2E)-geranyl diphosphate + diphosphate</text>
        <dbReference type="Rhea" id="RHEA:22408"/>
        <dbReference type="ChEBI" id="CHEBI:33019"/>
        <dbReference type="ChEBI" id="CHEBI:57623"/>
        <dbReference type="ChEBI" id="CHEBI:58057"/>
        <dbReference type="ChEBI" id="CHEBI:128769"/>
        <dbReference type="EC" id="2.5.1.1"/>
    </reaction>
</comment>
<comment type="catalytic activity">
    <reaction evidence="1">
        <text>isopentenyl diphosphate + (2E)-geranyl diphosphate = (2E,6E)-farnesyl diphosphate + diphosphate</text>
        <dbReference type="Rhea" id="RHEA:19361"/>
        <dbReference type="ChEBI" id="CHEBI:33019"/>
        <dbReference type="ChEBI" id="CHEBI:58057"/>
        <dbReference type="ChEBI" id="CHEBI:128769"/>
        <dbReference type="ChEBI" id="CHEBI:175763"/>
        <dbReference type="EC" id="2.5.1.10"/>
    </reaction>
</comment>
<comment type="catalytic activity">
    <reaction evidence="1">
        <text>isopentenyl diphosphate + (2E,6E)-farnesyl diphosphate = (2E,6E,10E)-geranylgeranyl diphosphate + diphosphate</text>
        <dbReference type="Rhea" id="RHEA:17653"/>
        <dbReference type="ChEBI" id="CHEBI:33019"/>
        <dbReference type="ChEBI" id="CHEBI:58756"/>
        <dbReference type="ChEBI" id="CHEBI:128769"/>
        <dbReference type="ChEBI" id="CHEBI:175763"/>
        <dbReference type="EC" id="2.5.1.29"/>
    </reaction>
</comment>
<comment type="cofactor">
    <cofactor evidence="1">
        <name>Mg(2+)</name>
        <dbReference type="ChEBI" id="CHEBI:18420"/>
    </cofactor>
    <text evidence="1">Binds 3 Mg(2+) ions per subunit.</text>
</comment>
<comment type="induction">
    <text evidence="3 4 5">The onset of expression correlates with the onset of aflatrem biosynthesis in stationary cultures (PubMed:15528556, PubMed:19801473). Expression is induced by the developmental and secondary metabolism regulator veA (PubMed:16988822).</text>
</comment>
<comment type="similarity">
    <text evidence="8">Belongs to the FPP/GGPP synthase family.</text>
</comment>